<comment type="function">
    <text evidence="1">Catalyzes the transfer of a ribosyl phosphate group from 5-phosphoribose 1-diphosphate to orotate, leading to the formation of orotidine monophosphate (OMP).</text>
</comment>
<comment type="catalytic activity">
    <reaction evidence="1">
        <text>orotidine 5'-phosphate + diphosphate = orotate + 5-phospho-alpha-D-ribose 1-diphosphate</text>
        <dbReference type="Rhea" id="RHEA:10380"/>
        <dbReference type="ChEBI" id="CHEBI:30839"/>
        <dbReference type="ChEBI" id="CHEBI:33019"/>
        <dbReference type="ChEBI" id="CHEBI:57538"/>
        <dbReference type="ChEBI" id="CHEBI:58017"/>
        <dbReference type="EC" id="2.4.2.10"/>
    </reaction>
</comment>
<comment type="cofactor">
    <cofactor evidence="1">
        <name>Mg(2+)</name>
        <dbReference type="ChEBI" id="CHEBI:18420"/>
    </cofactor>
</comment>
<comment type="pathway">
    <text evidence="1">Pyrimidine metabolism; UMP biosynthesis via de novo pathway; UMP from orotate: step 1/2.</text>
</comment>
<comment type="subunit">
    <text evidence="1">Homodimer.</text>
</comment>
<comment type="similarity">
    <text evidence="1">Belongs to the purine/pyrimidine phosphoribosyltransferase family. PyrE subfamily.</text>
</comment>
<sequence length="216" mass="23333">MTTPVSFHPQAFIELALSRGVLKFGEFTLKSGRVSPYFFNAGLLNDGEALSLLAQGYADKLTQCENVDVIFGPAYKGIPFVAATAVALSQVHNKSVPWGFNRKEAKDHGEGGVLVGAAVEGKKVWIIDDVITAGTAIREVVTILKNAGATIAGVLVALDRQERGQGELSAIQEVQKELEIPVHALITMKDLMDYLEAKGEKEALANMQAYREKYGI</sequence>
<keyword id="KW-0328">Glycosyltransferase</keyword>
<keyword id="KW-0460">Magnesium</keyword>
<keyword id="KW-0665">Pyrimidine biosynthesis</keyword>
<keyword id="KW-0808">Transferase</keyword>
<organism>
    <name type="scientific">Acinetobacter baumannii (strain ATCC 17978 / DSM 105126 / CIP 53.77 / LMG 1025 / NCDC KC755 / 5377)</name>
    <dbReference type="NCBI Taxonomy" id="400667"/>
    <lineage>
        <taxon>Bacteria</taxon>
        <taxon>Pseudomonadati</taxon>
        <taxon>Pseudomonadota</taxon>
        <taxon>Gammaproteobacteria</taxon>
        <taxon>Moraxellales</taxon>
        <taxon>Moraxellaceae</taxon>
        <taxon>Acinetobacter</taxon>
        <taxon>Acinetobacter calcoaceticus/baumannii complex</taxon>
    </lineage>
</organism>
<gene>
    <name evidence="1" type="primary">pyrE</name>
    <name type="ordered locus">A1S_3340</name>
</gene>
<dbReference type="EC" id="2.4.2.10" evidence="1"/>
<dbReference type="EMBL" id="CP000521">
    <property type="protein sequence ID" value="ABO13729.1"/>
    <property type="molecule type" value="Genomic_DNA"/>
</dbReference>
<dbReference type="RefSeq" id="WP_000211305.1">
    <property type="nucleotide sequence ID" value="NZ_CACVBA010000001.1"/>
</dbReference>
<dbReference type="SMR" id="A3M9Y5"/>
<dbReference type="KEGG" id="acb:A1S_3340"/>
<dbReference type="HOGENOM" id="CLU_074878_0_1_6"/>
<dbReference type="UniPathway" id="UPA00070">
    <property type="reaction ID" value="UER00119"/>
</dbReference>
<dbReference type="GO" id="GO:0005737">
    <property type="term" value="C:cytoplasm"/>
    <property type="evidence" value="ECO:0007669"/>
    <property type="project" value="TreeGrafter"/>
</dbReference>
<dbReference type="GO" id="GO:0000287">
    <property type="term" value="F:magnesium ion binding"/>
    <property type="evidence" value="ECO:0007669"/>
    <property type="project" value="UniProtKB-UniRule"/>
</dbReference>
<dbReference type="GO" id="GO:0004588">
    <property type="term" value="F:orotate phosphoribosyltransferase activity"/>
    <property type="evidence" value="ECO:0007669"/>
    <property type="project" value="UniProtKB-UniRule"/>
</dbReference>
<dbReference type="GO" id="GO:0006207">
    <property type="term" value="P:'de novo' pyrimidine nucleobase biosynthetic process"/>
    <property type="evidence" value="ECO:0007669"/>
    <property type="project" value="TreeGrafter"/>
</dbReference>
<dbReference type="GO" id="GO:0044205">
    <property type="term" value="P:'de novo' UMP biosynthetic process"/>
    <property type="evidence" value="ECO:0007669"/>
    <property type="project" value="UniProtKB-UniRule"/>
</dbReference>
<dbReference type="GO" id="GO:0046132">
    <property type="term" value="P:pyrimidine ribonucleoside biosynthetic process"/>
    <property type="evidence" value="ECO:0007669"/>
    <property type="project" value="TreeGrafter"/>
</dbReference>
<dbReference type="CDD" id="cd06223">
    <property type="entry name" value="PRTases_typeI"/>
    <property type="match status" value="1"/>
</dbReference>
<dbReference type="FunFam" id="3.40.50.2020:FF:000008">
    <property type="entry name" value="Orotate phosphoribosyltransferase"/>
    <property type="match status" value="1"/>
</dbReference>
<dbReference type="Gene3D" id="3.40.50.2020">
    <property type="match status" value="1"/>
</dbReference>
<dbReference type="HAMAP" id="MF_01208">
    <property type="entry name" value="PyrE"/>
    <property type="match status" value="1"/>
</dbReference>
<dbReference type="InterPro" id="IPR023031">
    <property type="entry name" value="OPRT"/>
</dbReference>
<dbReference type="InterPro" id="IPR004467">
    <property type="entry name" value="Or_phspho_trans_dom"/>
</dbReference>
<dbReference type="InterPro" id="IPR000836">
    <property type="entry name" value="PRibTrfase_dom"/>
</dbReference>
<dbReference type="InterPro" id="IPR029057">
    <property type="entry name" value="PRTase-like"/>
</dbReference>
<dbReference type="NCBIfam" id="TIGR00336">
    <property type="entry name" value="pyrE"/>
    <property type="match status" value="1"/>
</dbReference>
<dbReference type="PANTHER" id="PTHR46683">
    <property type="entry name" value="OROTATE PHOSPHORIBOSYLTRANSFERASE 1-RELATED"/>
    <property type="match status" value="1"/>
</dbReference>
<dbReference type="PANTHER" id="PTHR46683:SF1">
    <property type="entry name" value="OROTATE PHOSPHORIBOSYLTRANSFERASE 1-RELATED"/>
    <property type="match status" value="1"/>
</dbReference>
<dbReference type="Pfam" id="PF00156">
    <property type="entry name" value="Pribosyltran"/>
    <property type="match status" value="1"/>
</dbReference>
<dbReference type="SUPFAM" id="SSF53271">
    <property type="entry name" value="PRTase-like"/>
    <property type="match status" value="1"/>
</dbReference>
<evidence type="ECO:0000255" key="1">
    <source>
        <dbReference type="HAMAP-Rule" id="MF_01208"/>
    </source>
</evidence>
<protein>
    <recommendedName>
        <fullName evidence="1">Orotate phosphoribosyltransferase</fullName>
        <shortName evidence="1">OPRT</shortName>
        <shortName evidence="1">OPRTase</shortName>
        <ecNumber evidence="1">2.4.2.10</ecNumber>
    </recommendedName>
</protein>
<accession>A3M9Y5</accession>
<reference key="1">
    <citation type="journal article" date="2007" name="Genes Dev.">
        <title>New insights into Acinetobacter baumannii pathogenesis revealed by high-density pyrosequencing and transposon mutagenesis.</title>
        <authorList>
            <person name="Smith M.G."/>
            <person name="Gianoulis T.A."/>
            <person name="Pukatzki S."/>
            <person name="Mekalanos J.J."/>
            <person name="Ornston L.N."/>
            <person name="Gerstein M."/>
            <person name="Snyder M."/>
        </authorList>
    </citation>
    <scope>NUCLEOTIDE SEQUENCE [LARGE SCALE GENOMIC DNA]</scope>
    <source>
        <strain>ATCC 17978 / DSM 105126 / CIP 53.77 / LMG 1025 / NCDC KC755 / 5377</strain>
    </source>
</reference>
<feature type="chain" id="PRO_1000066199" description="Orotate phosphoribosyltransferase">
    <location>
        <begin position="1"/>
        <end position="216"/>
    </location>
</feature>
<feature type="binding site" description="in other chain" evidence="1">
    <location>
        <position position="30"/>
    </location>
    <ligand>
        <name>5-phospho-alpha-D-ribose 1-diphosphate</name>
        <dbReference type="ChEBI" id="CHEBI:58017"/>
        <note>ligand shared between dimeric partners</note>
    </ligand>
</feature>
<feature type="binding site" evidence="1">
    <location>
        <begin position="38"/>
        <end position="39"/>
    </location>
    <ligand>
        <name>orotate</name>
        <dbReference type="ChEBI" id="CHEBI:30839"/>
    </ligand>
</feature>
<feature type="binding site" description="in other chain" evidence="1">
    <location>
        <begin position="75"/>
        <end position="76"/>
    </location>
    <ligand>
        <name>5-phospho-alpha-D-ribose 1-diphosphate</name>
        <dbReference type="ChEBI" id="CHEBI:58017"/>
        <note>ligand shared between dimeric partners</note>
    </ligand>
</feature>
<feature type="binding site" evidence="1">
    <location>
        <position position="102"/>
    </location>
    <ligand>
        <name>5-phospho-alpha-D-ribose 1-diphosphate</name>
        <dbReference type="ChEBI" id="CHEBI:58017"/>
        <note>ligand shared between dimeric partners</note>
    </ligand>
</feature>
<feature type="binding site" description="in other chain" evidence="1">
    <location>
        <position position="103"/>
    </location>
    <ligand>
        <name>5-phospho-alpha-D-ribose 1-diphosphate</name>
        <dbReference type="ChEBI" id="CHEBI:58017"/>
        <note>ligand shared between dimeric partners</note>
    </ligand>
</feature>
<feature type="binding site" evidence="1">
    <location>
        <position position="106"/>
    </location>
    <ligand>
        <name>5-phospho-alpha-D-ribose 1-diphosphate</name>
        <dbReference type="ChEBI" id="CHEBI:58017"/>
        <note>ligand shared between dimeric partners</note>
    </ligand>
</feature>
<feature type="binding site" evidence="1">
    <location>
        <position position="108"/>
    </location>
    <ligand>
        <name>5-phospho-alpha-D-ribose 1-diphosphate</name>
        <dbReference type="ChEBI" id="CHEBI:58017"/>
        <note>ligand shared between dimeric partners</note>
    </ligand>
</feature>
<feature type="binding site" description="in other chain" evidence="1">
    <location>
        <begin position="128"/>
        <end position="136"/>
    </location>
    <ligand>
        <name>5-phospho-alpha-D-ribose 1-diphosphate</name>
        <dbReference type="ChEBI" id="CHEBI:58017"/>
        <note>ligand shared between dimeric partners</note>
    </ligand>
</feature>
<feature type="binding site" evidence="1">
    <location>
        <position position="132"/>
    </location>
    <ligand>
        <name>orotate</name>
        <dbReference type="ChEBI" id="CHEBI:30839"/>
    </ligand>
</feature>
<feature type="binding site" evidence="1">
    <location>
        <position position="160"/>
    </location>
    <ligand>
        <name>orotate</name>
        <dbReference type="ChEBI" id="CHEBI:30839"/>
    </ligand>
</feature>
<name>PYRE_ACIBT</name>
<proteinExistence type="inferred from homology"/>